<name>PYRD_BURCH</name>
<reference key="1">
    <citation type="submission" date="2006-08" db="EMBL/GenBank/DDBJ databases">
        <title>Complete sequence of chromosome 1 of Burkholderia cenocepacia HI2424.</title>
        <authorList>
            <person name="Copeland A."/>
            <person name="Lucas S."/>
            <person name="Lapidus A."/>
            <person name="Barry K."/>
            <person name="Detter J.C."/>
            <person name="Glavina del Rio T."/>
            <person name="Hammon N."/>
            <person name="Israni S."/>
            <person name="Pitluck S."/>
            <person name="Chain P."/>
            <person name="Malfatti S."/>
            <person name="Shin M."/>
            <person name="Vergez L."/>
            <person name="Schmutz J."/>
            <person name="Larimer F."/>
            <person name="Land M."/>
            <person name="Hauser L."/>
            <person name="Kyrpides N."/>
            <person name="Kim E."/>
            <person name="LiPuma J.J."/>
            <person name="Gonzalez C.F."/>
            <person name="Konstantinidis K."/>
            <person name="Tiedje J.M."/>
            <person name="Richardson P."/>
        </authorList>
    </citation>
    <scope>NUCLEOTIDE SEQUENCE [LARGE SCALE GENOMIC DNA]</scope>
    <source>
        <strain>HI2424</strain>
    </source>
</reference>
<proteinExistence type="inferred from homology"/>
<sequence>MFSSLYPLARASLFKMDAEDAHHLTLRALGAAGRTGLACALSARVPDAPRTVMGLTFRNPVGLAAGLDKDGAAIDGLAALGFGFIEVGTVTPRPQPGNPRPRMFRLPQAEALINRMGFNNHGVDQFVKNVQAARYRGILGLNIGKNADTPIERAAEDYLYCLERVYPFASYVTINISSPNTKNLRQLQGAGELDALLAALKDKQQRLADLHGKLVPLALKIAPDLDDEQVKEIGDTLLRHKIEAVIATNTTLSRAAVQGLPHADEAGGLSGRPVFDASNEVIRKLHAEVGNDVPIIGVGGIFSGEDAHAKLAAGAALVQLYTGFIYRGPALVSECVKAIARERSA</sequence>
<comment type="function">
    <text evidence="1">Catalyzes the conversion of dihydroorotate to orotate with quinone as electron acceptor.</text>
</comment>
<comment type="catalytic activity">
    <reaction evidence="1">
        <text>(S)-dihydroorotate + a quinone = orotate + a quinol</text>
        <dbReference type="Rhea" id="RHEA:30187"/>
        <dbReference type="ChEBI" id="CHEBI:24646"/>
        <dbReference type="ChEBI" id="CHEBI:30839"/>
        <dbReference type="ChEBI" id="CHEBI:30864"/>
        <dbReference type="ChEBI" id="CHEBI:132124"/>
        <dbReference type="EC" id="1.3.5.2"/>
    </reaction>
</comment>
<comment type="cofactor">
    <cofactor evidence="1">
        <name>FMN</name>
        <dbReference type="ChEBI" id="CHEBI:58210"/>
    </cofactor>
    <text evidence="1">Binds 1 FMN per subunit.</text>
</comment>
<comment type="pathway">
    <text evidence="1">Pyrimidine metabolism; UMP biosynthesis via de novo pathway; orotate from (S)-dihydroorotate (quinone route): step 1/1.</text>
</comment>
<comment type="subunit">
    <text evidence="1">Monomer.</text>
</comment>
<comment type="subcellular location">
    <subcellularLocation>
        <location evidence="1">Cell membrane</location>
        <topology evidence="1">Peripheral membrane protein</topology>
    </subcellularLocation>
</comment>
<comment type="similarity">
    <text evidence="1">Belongs to the dihydroorotate dehydrogenase family. Type 2 subfamily.</text>
</comment>
<comment type="sequence caution" evidence="2">
    <conflict type="erroneous initiation">
        <sequence resource="EMBL-CDS" id="ABK08306"/>
    </conflict>
</comment>
<protein>
    <recommendedName>
        <fullName evidence="1">Dihydroorotate dehydrogenase (quinone)</fullName>
        <ecNumber evidence="1">1.3.5.2</ecNumber>
    </recommendedName>
    <alternativeName>
        <fullName evidence="1">DHOdehase</fullName>
        <shortName evidence="1">DHOD</shortName>
        <shortName evidence="1">DHODase</shortName>
    </alternativeName>
    <alternativeName>
        <fullName evidence="1">Dihydroorotate oxidase</fullName>
    </alternativeName>
</protein>
<keyword id="KW-1003">Cell membrane</keyword>
<keyword id="KW-0285">Flavoprotein</keyword>
<keyword id="KW-0288">FMN</keyword>
<keyword id="KW-0472">Membrane</keyword>
<keyword id="KW-0560">Oxidoreductase</keyword>
<keyword id="KW-0665">Pyrimidine biosynthesis</keyword>
<feature type="chain" id="PRO_0000336458" description="Dihydroorotate dehydrogenase (quinone)">
    <location>
        <begin position="1"/>
        <end position="345"/>
    </location>
</feature>
<feature type="active site" description="Nucleophile" evidence="1">
    <location>
        <position position="178"/>
    </location>
</feature>
<feature type="binding site" evidence="1">
    <location>
        <begin position="65"/>
        <end position="69"/>
    </location>
    <ligand>
        <name>FMN</name>
        <dbReference type="ChEBI" id="CHEBI:58210"/>
    </ligand>
</feature>
<feature type="binding site" evidence="1">
    <location>
        <position position="69"/>
    </location>
    <ligand>
        <name>substrate</name>
    </ligand>
</feature>
<feature type="binding site" evidence="1">
    <location>
        <position position="89"/>
    </location>
    <ligand>
        <name>FMN</name>
        <dbReference type="ChEBI" id="CHEBI:58210"/>
    </ligand>
</feature>
<feature type="binding site" evidence="1">
    <location>
        <begin position="114"/>
        <end position="118"/>
    </location>
    <ligand>
        <name>substrate</name>
    </ligand>
</feature>
<feature type="binding site" evidence="1">
    <location>
        <position position="142"/>
    </location>
    <ligand>
        <name>FMN</name>
        <dbReference type="ChEBI" id="CHEBI:58210"/>
    </ligand>
</feature>
<feature type="binding site" evidence="1">
    <location>
        <position position="175"/>
    </location>
    <ligand>
        <name>FMN</name>
        <dbReference type="ChEBI" id="CHEBI:58210"/>
    </ligand>
</feature>
<feature type="binding site" evidence="1">
    <location>
        <position position="175"/>
    </location>
    <ligand>
        <name>substrate</name>
    </ligand>
</feature>
<feature type="binding site" evidence="1">
    <location>
        <position position="180"/>
    </location>
    <ligand>
        <name>substrate</name>
    </ligand>
</feature>
<feature type="binding site" evidence="1">
    <location>
        <position position="220"/>
    </location>
    <ligand>
        <name>FMN</name>
        <dbReference type="ChEBI" id="CHEBI:58210"/>
    </ligand>
</feature>
<feature type="binding site" evidence="1">
    <location>
        <position position="248"/>
    </location>
    <ligand>
        <name>FMN</name>
        <dbReference type="ChEBI" id="CHEBI:58210"/>
    </ligand>
</feature>
<feature type="binding site" evidence="1">
    <location>
        <begin position="249"/>
        <end position="250"/>
    </location>
    <ligand>
        <name>substrate</name>
    </ligand>
</feature>
<feature type="binding site" evidence="1">
    <location>
        <position position="271"/>
    </location>
    <ligand>
        <name>FMN</name>
        <dbReference type="ChEBI" id="CHEBI:58210"/>
    </ligand>
</feature>
<feature type="binding site" evidence="1">
    <location>
        <position position="300"/>
    </location>
    <ligand>
        <name>FMN</name>
        <dbReference type="ChEBI" id="CHEBI:58210"/>
    </ligand>
</feature>
<feature type="binding site" evidence="1">
    <location>
        <begin position="321"/>
        <end position="322"/>
    </location>
    <ligand>
        <name>FMN</name>
        <dbReference type="ChEBI" id="CHEBI:58210"/>
    </ligand>
</feature>
<dbReference type="EC" id="1.3.5.2" evidence="1"/>
<dbReference type="EMBL" id="CP000458">
    <property type="protein sequence ID" value="ABK08306.1"/>
    <property type="status" value="ALT_INIT"/>
    <property type="molecule type" value="Genomic_DNA"/>
</dbReference>
<dbReference type="RefSeq" id="WP_041489191.1">
    <property type="nucleotide sequence ID" value="NC_008542.1"/>
</dbReference>
<dbReference type="SMR" id="A0K729"/>
<dbReference type="KEGG" id="bch:Bcen2424_1554"/>
<dbReference type="HOGENOM" id="CLU_013640_2_0_4"/>
<dbReference type="UniPathway" id="UPA00070">
    <property type="reaction ID" value="UER00946"/>
</dbReference>
<dbReference type="GO" id="GO:0005737">
    <property type="term" value="C:cytoplasm"/>
    <property type="evidence" value="ECO:0007669"/>
    <property type="project" value="InterPro"/>
</dbReference>
<dbReference type="GO" id="GO:0005886">
    <property type="term" value="C:plasma membrane"/>
    <property type="evidence" value="ECO:0007669"/>
    <property type="project" value="UniProtKB-SubCell"/>
</dbReference>
<dbReference type="GO" id="GO:0106430">
    <property type="term" value="F:dihydroorotate dehydrogenase (quinone) activity"/>
    <property type="evidence" value="ECO:0007669"/>
    <property type="project" value="UniProtKB-EC"/>
</dbReference>
<dbReference type="GO" id="GO:0006207">
    <property type="term" value="P:'de novo' pyrimidine nucleobase biosynthetic process"/>
    <property type="evidence" value="ECO:0007669"/>
    <property type="project" value="InterPro"/>
</dbReference>
<dbReference type="GO" id="GO:0044205">
    <property type="term" value="P:'de novo' UMP biosynthetic process"/>
    <property type="evidence" value="ECO:0007669"/>
    <property type="project" value="UniProtKB-UniRule"/>
</dbReference>
<dbReference type="CDD" id="cd04738">
    <property type="entry name" value="DHOD_2_like"/>
    <property type="match status" value="1"/>
</dbReference>
<dbReference type="FunFam" id="3.20.20.70:FF:000028">
    <property type="entry name" value="Dihydroorotate dehydrogenase (quinone)"/>
    <property type="match status" value="1"/>
</dbReference>
<dbReference type="Gene3D" id="3.20.20.70">
    <property type="entry name" value="Aldolase class I"/>
    <property type="match status" value="1"/>
</dbReference>
<dbReference type="HAMAP" id="MF_00225">
    <property type="entry name" value="DHO_dh_type2"/>
    <property type="match status" value="1"/>
</dbReference>
<dbReference type="InterPro" id="IPR013785">
    <property type="entry name" value="Aldolase_TIM"/>
</dbReference>
<dbReference type="InterPro" id="IPR050074">
    <property type="entry name" value="DHO_dehydrogenase"/>
</dbReference>
<dbReference type="InterPro" id="IPR012135">
    <property type="entry name" value="Dihydroorotate_DH_1_2"/>
</dbReference>
<dbReference type="InterPro" id="IPR005719">
    <property type="entry name" value="Dihydroorotate_DH_2"/>
</dbReference>
<dbReference type="InterPro" id="IPR005720">
    <property type="entry name" value="Dihydroorotate_DH_cat"/>
</dbReference>
<dbReference type="InterPro" id="IPR001295">
    <property type="entry name" value="Dihydroorotate_DH_CS"/>
</dbReference>
<dbReference type="NCBIfam" id="NF003644">
    <property type="entry name" value="PRK05286.1-1"/>
    <property type="match status" value="1"/>
</dbReference>
<dbReference type="NCBIfam" id="NF003645">
    <property type="entry name" value="PRK05286.1-2"/>
    <property type="match status" value="1"/>
</dbReference>
<dbReference type="NCBIfam" id="NF003646">
    <property type="entry name" value="PRK05286.1-4"/>
    <property type="match status" value="1"/>
</dbReference>
<dbReference type="NCBIfam" id="NF003652">
    <property type="entry name" value="PRK05286.2-5"/>
    <property type="match status" value="1"/>
</dbReference>
<dbReference type="NCBIfam" id="TIGR01036">
    <property type="entry name" value="pyrD_sub2"/>
    <property type="match status" value="1"/>
</dbReference>
<dbReference type="PANTHER" id="PTHR48109:SF4">
    <property type="entry name" value="DIHYDROOROTATE DEHYDROGENASE (QUINONE), MITOCHONDRIAL"/>
    <property type="match status" value="1"/>
</dbReference>
<dbReference type="PANTHER" id="PTHR48109">
    <property type="entry name" value="DIHYDROOROTATE DEHYDROGENASE (QUINONE), MITOCHONDRIAL-RELATED"/>
    <property type="match status" value="1"/>
</dbReference>
<dbReference type="Pfam" id="PF01180">
    <property type="entry name" value="DHO_dh"/>
    <property type="match status" value="1"/>
</dbReference>
<dbReference type="PIRSF" id="PIRSF000164">
    <property type="entry name" value="DHO_oxidase"/>
    <property type="match status" value="1"/>
</dbReference>
<dbReference type="SUPFAM" id="SSF51395">
    <property type="entry name" value="FMN-linked oxidoreductases"/>
    <property type="match status" value="1"/>
</dbReference>
<dbReference type="PROSITE" id="PS00911">
    <property type="entry name" value="DHODEHASE_1"/>
    <property type="match status" value="1"/>
</dbReference>
<dbReference type="PROSITE" id="PS00912">
    <property type="entry name" value="DHODEHASE_2"/>
    <property type="match status" value="1"/>
</dbReference>
<evidence type="ECO:0000255" key="1">
    <source>
        <dbReference type="HAMAP-Rule" id="MF_00225"/>
    </source>
</evidence>
<evidence type="ECO:0000305" key="2"/>
<organism>
    <name type="scientific">Burkholderia cenocepacia (strain HI2424)</name>
    <dbReference type="NCBI Taxonomy" id="331272"/>
    <lineage>
        <taxon>Bacteria</taxon>
        <taxon>Pseudomonadati</taxon>
        <taxon>Pseudomonadota</taxon>
        <taxon>Betaproteobacteria</taxon>
        <taxon>Burkholderiales</taxon>
        <taxon>Burkholderiaceae</taxon>
        <taxon>Burkholderia</taxon>
        <taxon>Burkholderia cepacia complex</taxon>
    </lineage>
</organism>
<gene>
    <name evidence="1" type="primary">pyrD</name>
    <name type="ordered locus">Bcen2424_1554</name>
</gene>
<accession>A0K729</accession>